<keyword id="KW-0143">Chaperone</keyword>
<keyword id="KW-0963">Cytoplasm</keyword>
<keyword id="KW-1015">Disulfide bond</keyword>
<keyword id="KW-0676">Redox-active center</keyword>
<keyword id="KW-1185">Reference proteome</keyword>
<keyword id="KW-0862">Zinc</keyword>
<proteinExistence type="inferred from homology"/>
<organism>
    <name type="scientific">Clostridium botulinum (strain Hall / ATCC 3502 / NCTC 13319 / Type A)</name>
    <dbReference type="NCBI Taxonomy" id="441771"/>
    <lineage>
        <taxon>Bacteria</taxon>
        <taxon>Bacillati</taxon>
        <taxon>Bacillota</taxon>
        <taxon>Clostridia</taxon>
        <taxon>Eubacteriales</taxon>
        <taxon>Clostridiaceae</taxon>
        <taxon>Clostridium</taxon>
    </lineage>
</organism>
<accession>A5I6M3</accession>
<accession>A7G7V7</accession>
<gene>
    <name evidence="1" type="primary">hslO</name>
    <name type="ordered locus">CBO3143</name>
    <name type="ordered locus">CLC_3053</name>
</gene>
<dbReference type="EMBL" id="CP000727">
    <property type="protein sequence ID" value="ABS37656.1"/>
    <property type="molecule type" value="Genomic_DNA"/>
</dbReference>
<dbReference type="EMBL" id="AM412317">
    <property type="protein sequence ID" value="CAL84705.1"/>
    <property type="molecule type" value="Genomic_DNA"/>
</dbReference>
<dbReference type="RefSeq" id="WP_012048141.1">
    <property type="nucleotide sequence ID" value="NC_009698.1"/>
</dbReference>
<dbReference type="RefSeq" id="YP_001255633.1">
    <property type="nucleotide sequence ID" value="NC_009495.1"/>
</dbReference>
<dbReference type="RefSeq" id="YP_001388872.1">
    <property type="nucleotide sequence ID" value="NC_009698.1"/>
</dbReference>
<dbReference type="SMR" id="A5I6M3"/>
<dbReference type="GeneID" id="5184258"/>
<dbReference type="KEGG" id="cbh:CLC_3053"/>
<dbReference type="KEGG" id="cbo:CBO3143"/>
<dbReference type="PATRIC" id="fig|413999.7.peg.3122"/>
<dbReference type="HOGENOM" id="CLU_054493_1_0_9"/>
<dbReference type="PRO" id="PR:A5I6M3"/>
<dbReference type="Proteomes" id="UP000001986">
    <property type="component" value="Chromosome"/>
</dbReference>
<dbReference type="GO" id="GO:0005737">
    <property type="term" value="C:cytoplasm"/>
    <property type="evidence" value="ECO:0000318"/>
    <property type="project" value="GO_Central"/>
</dbReference>
<dbReference type="GO" id="GO:0044183">
    <property type="term" value="F:protein folding chaperone"/>
    <property type="evidence" value="ECO:0000318"/>
    <property type="project" value="GO_Central"/>
</dbReference>
<dbReference type="GO" id="GO:0051082">
    <property type="term" value="F:unfolded protein binding"/>
    <property type="evidence" value="ECO:0007669"/>
    <property type="project" value="UniProtKB-UniRule"/>
</dbReference>
<dbReference type="GO" id="GO:0042026">
    <property type="term" value="P:protein refolding"/>
    <property type="evidence" value="ECO:0000318"/>
    <property type="project" value="GO_Central"/>
</dbReference>
<dbReference type="CDD" id="cd00498">
    <property type="entry name" value="Hsp33"/>
    <property type="match status" value="1"/>
</dbReference>
<dbReference type="Gene3D" id="3.55.30.10">
    <property type="entry name" value="Hsp33 domain"/>
    <property type="match status" value="1"/>
</dbReference>
<dbReference type="Gene3D" id="3.90.1280.10">
    <property type="entry name" value="HSP33 redox switch-like"/>
    <property type="match status" value="1"/>
</dbReference>
<dbReference type="HAMAP" id="MF_00117">
    <property type="entry name" value="HslO"/>
    <property type="match status" value="1"/>
</dbReference>
<dbReference type="InterPro" id="IPR000397">
    <property type="entry name" value="Heat_shock_Hsp33"/>
</dbReference>
<dbReference type="InterPro" id="IPR016154">
    <property type="entry name" value="Heat_shock_Hsp33_C"/>
</dbReference>
<dbReference type="InterPro" id="IPR016153">
    <property type="entry name" value="Heat_shock_Hsp33_N"/>
</dbReference>
<dbReference type="NCBIfam" id="NF001033">
    <property type="entry name" value="PRK00114.1"/>
    <property type="match status" value="1"/>
</dbReference>
<dbReference type="PANTHER" id="PTHR30111">
    <property type="entry name" value="33 KDA CHAPERONIN"/>
    <property type="match status" value="1"/>
</dbReference>
<dbReference type="PANTHER" id="PTHR30111:SF1">
    <property type="entry name" value="33 KDA CHAPERONIN"/>
    <property type="match status" value="1"/>
</dbReference>
<dbReference type="Pfam" id="PF01430">
    <property type="entry name" value="HSP33"/>
    <property type="match status" value="1"/>
</dbReference>
<dbReference type="PIRSF" id="PIRSF005261">
    <property type="entry name" value="Heat_shock_Hsp33"/>
    <property type="match status" value="1"/>
</dbReference>
<dbReference type="SUPFAM" id="SSF64397">
    <property type="entry name" value="Hsp33 domain"/>
    <property type="match status" value="1"/>
</dbReference>
<dbReference type="SUPFAM" id="SSF118352">
    <property type="entry name" value="HSP33 redox switch-like"/>
    <property type="match status" value="1"/>
</dbReference>
<reference key="1">
    <citation type="journal article" date="2007" name="Genome Res.">
        <title>Genome sequence of a proteolytic (Group I) Clostridium botulinum strain Hall A and comparative analysis of the clostridial genomes.</title>
        <authorList>
            <person name="Sebaihia M."/>
            <person name="Peck M.W."/>
            <person name="Minton N.P."/>
            <person name="Thomson N.R."/>
            <person name="Holden M.T.G."/>
            <person name="Mitchell W.J."/>
            <person name="Carter A.T."/>
            <person name="Bentley S.D."/>
            <person name="Mason D.R."/>
            <person name="Crossman L."/>
            <person name="Paul C.J."/>
            <person name="Ivens A."/>
            <person name="Wells-Bennik M.H.J."/>
            <person name="Davis I.J."/>
            <person name="Cerdeno-Tarraga A.M."/>
            <person name="Churcher C."/>
            <person name="Quail M.A."/>
            <person name="Chillingworth T."/>
            <person name="Feltwell T."/>
            <person name="Fraser A."/>
            <person name="Goodhead I."/>
            <person name="Hance Z."/>
            <person name="Jagels K."/>
            <person name="Larke N."/>
            <person name="Maddison M."/>
            <person name="Moule S."/>
            <person name="Mungall K."/>
            <person name="Norbertczak H."/>
            <person name="Rabbinowitsch E."/>
            <person name="Sanders M."/>
            <person name="Simmonds M."/>
            <person name="White B."/>
            <person name="Whithead S."/>
            <person name="Parkhill J."/>
        </authorList>
    </citation>
    <scope>NUCLEOTIDE SEQUENCE [LARGE SCALE GENOMIC DNA]</scope>
    <source>
        <strain>Hall / ATCC 3502 / NCTC 13319 / Type A</strain>
    </source>
</reference>
<reference key="2">
    <citation type="journal article" date="2007" name="PLoS ONE">
        <title>Analysis of the neurotoxin complex genes in Clostridium botulinum A1-A4 and B1 strains: BoNT/A3, /Ba4 and /B1 clusters are located within plasmids.</title>
        <authorList>
            <person name="Smith T.J."/>
            <person name="Hill K.K."/>
            <person name="Foley B.T."/>
            <person name="Detter J.C."/>
            <person name="Munk A.C."/>
            <person name="Bruce D.C."/>
            <person name="Doggett N.A."/>
            <person name="Smith L.A."/>
            <person name="Marks J.D."/>
            <person name="Xie G."/>
            <person name="Brettin T.S."/>
        </authorList>
    </citation>
    <scope>NUCLEOTIDE SEQUENCE [LARGE SCALE GENOMIC DNA]</scope>
    <source>
        <strain>Hall / ATCC 3502 / NCTC 13319 / Type A</strain>
    </source>
</reference>
<feature type="chain" id="PRO_1000015534" description="33 kDa chaperonin">
    <location>
        <begin position="1"/>
        <end position="296"/>
    </location>
</feature>
<feature type="disulfide bond" description="Redox-active" evidence="1">
    <location>
        <begin position="238"/>
        <end position="240"/>
    </location>
</feature>
<feature type="disulfide bond" description="Redox-active" evidence="1">
    <location>
        <begin position="271"/>
        <end position="274"/>
    </location>
</feature>
<sequence>MKDKLVKAIAKDGQVRIIGAITTELVNEGVRLHNCAPTAAAALGRMLTAGALMGTTLKSEKDTLTLQIHGGGIAKGVVITSYADGHVKGYIGNPTADIEPNSKGKLDVSGIIGKNGNLLVIRDMGLKEPYIGQVPIYTGEIGEDLAYYYTVSEQTPSAVGLGVLVDKDLSIKSAGGFIIQMMPGADEMLADLISYRLEEIPSITEMISKGMTIEEILEYIFEDMDLKILESIVPEYRCDCSREKVERALASIGQKDLKEIYDEGKEEELKCHFCNKAYVFSHDEVGDILENYYSEK</sequence>
<protein>
    <recommendedName>
        <fullName evidence="1">33 kDa chaperonin</fullName>
    </recommendedName>
    <alternativeName>
        <fullName evidence="1">Heat shock protein 33 homolog</fullName>
        <shortName evidence="1">HSP33</shortName>
    </alternativeName>
</protein>
<comment type="function">
    <text evidence="1">Redox regulated molecular chaperone. Protects both thermally unfolding and oxidatively damaged proteins from irreversible aggregation. Plays an important role in the bacterial defense system toward oxidative stress.</text>
</comment>
<comment type="subcellular location">
    <subcellularLocation>
        <location evidence="1">Cytoplasm</location>
    </subcellularLocation>
</comment>
<comment type="PTM">
    <text evidence="1">Under oxidizing conditions two disulfide bonds are formed involving the reactive cysteines. Under reducing conditions zinc is bound to the reactive cysteines and the protein is inactive.</text>
</comment>
<comment type="similarity">
    <text evidence="1">Belongs to the HSP33 family.</text>
</comment>
<name>HSLO_CLOBH</name>
<evidence type="ECO:0000255" key="1">
    <source>
        <dbReference type="HAMAP-Rule" id="MF_00117"/>
    </source>
</evidence>